<accession>Q146Y6</accession>
<comment type="function">
    <text evidence="1">Allows the formation of correctly charged Asn-tRNA(Asn) or Gln-tRNA(Gln) through the transamidation of misacylated Asp-tRNA(Asn) or Glu-tRNA(Gln) in organisms which lack either or both of asparaginyl-tRNA or glutaminyl-tRNA synthetases. The reaction takes place in the presence of glutamine and ATP through an activated phospho-Asp-tRNA(Asn) or phospho-Glu-tRNA(Gln).</text>
</comment>
<comment type="catalytic activity">
    <reaction evidence="1">
        <text>L-glutamyl-tRNA(Gln) + L-glutamine + ATP + H2O = L-glutaminyl-tRNA(Gln) + L-glutamate + ADP + phosphate + H(+)</text>
        <dbReference type="Rhea" id="RHEA:17521"/>
        <dbReference type="Rhea" id="RHEA-COMP:9681"/>
        <dbReference type="Rhea" id="RHEA-COMP:9684"/>
        <dbReference type="ChEBI" id="CHEBI:15377"/>
        <dbReference type="ChEBI" id="CHEBI:15378"/>
        <dbReference type="ChEBI" id="CHEBI:29985"/>
        <dbReference type="ChEBI" id="CHEBI:30616"/>
        <dbReference type="ChEBI" id="CHEBI:43474"/>
        <dbReference type="ChEBI" id="CHEBI:58359"/>
        <dbReference type="ChEBI" id="CHEBI:78520"/>
        <dbReference type="ChEBI" id="CHEBI:78521"/>
        <dbReference type="ChEBI" id="CHEBI:456216"/>
    </reaction>
</comment>
<comment type="catalytic activity">
    <reaction evidence="1">
        <text>L-aspartyl-tRNA(Asn) + L-glutamine + ATP + H2O = L-asparaginyl-tRNA(Asn) + L-glutamate + ADP + phosphate + 2 H(+)</text>
        <dbReference type="Rhea" id="RHEA:14513"/>
        <dbReference type="Rhea" id="RHEA-COMP:9674"/>
        <dbReference type="Rhea" id="RHEA-COMP:9677"/>
        <dbReference type="ChEBI" id="CHEBI:15377"/>
        <dbReference type="ChEBI" id="CHEBI:15378"/>
        <dbReference type="ChEBI" id="CHEBI:29985"/>
        <dbReference type="ChEBI" id="CHEBI:30616"/>
        <dbReference type="ChEBI" id="CHEBI:43474"/>
        <dbReference type="ChEBI" id="CHEBI:58359"/>
        <dbReference type="ChEBI" id="CHEBI:78515"/>
        <dbReference type="ChEBI" id="CHEBI:78516"/>
        <dbReference type="ChEBI" id="CHEBI:456216"/>
    </reaction>
</comment>
<comment type="subunit">
    <text evidence="1">Heterotrimer of A, B and C subunits.</text>
</comment>
<comment type="similarity">
    <text evidence="1">Belongs to the GatC family.</text>
</comment>
<sequence>MALTLTDVKRIAHLARLELADAEAEHTLVQLNDFFGLVEQMQAVDTTGIAPLAHPIEQIEDVALRLRDDTVTETVEREAFQRPAPAVQDGLYLVPKVIE</sequence>
<keyword id="KW-0067">ATP-binding</keyword>
<keyword id="KW-0436">Ligase</keyword>
<keyword id="KW-0547">Nucleotide-binding</keyword>
<keyword id="KW-0648">Protein biosynthesis</keyword>
<keyword id="KW-1185">Reference proteome</keyword>
<organism>
    <name type="scientific">Paraburkholderia xenovorans (strain LB400)</name>
    <dbReference type="NCBI Taxonomy" id="266265"/>
    <lineage>
        <taxon>Bacteria</taxon>
        <taxon>Pseudomonadati</taxon>
        <taxon>Pseudomonadota</taxon>
        <taxon>Betaproteobacteria</taxon>
        <taxon>Burkholderiales</taxon>
        <taxon>Burkholderiaceae</taxon>
        <taxon>Paraburkholderia</taxon>
    </lineage>
</organism>
<dbReference type="EC" id="6.3.5.-" evidence="1"/>
<dbReference type="EMBL" id="CP000270">
    <property type="protein sequence ID" value="ABE28603.1"/>
    <property type="molecule type" value="Genomic_DNA"/>
</dbReference>
<dbReference type="RefSeq" id="WP_007179698.1">
    <property type="nucleotide sequence ID" value="NZ_CP008760.1"/>
</dbReference>
<dbReference type="SMR" id="Q146Y6"/>
<dbReference type="STRING" id="266265.Bxe_A4397"/>
<dbReference type="KEGG" id="bxb:DR64_2072"/>
<dbReference type="KEGG" id="bxe:Bxe_A4397"/>
<dbReference type="eggNOG" id="COG0721">
    <property type="taxonomic scope" value="Bacteria"/>
</dbReference>
<dbReference type="OrthoDB" id="9794326at2"/>
<dbReference type="Proteomes" id="UP000001817">
    <property type="component" value="Chromosome 1"/>
</dbReference>
<dbReference type="GO" id="GO:0050566">
    <property type="term" value="F:asparaginyl-tRNA synthase (glutamine-hydrolyzing) activity"/>
    <property type="evidence" value="ECO:0007669"/>
    <property type="project" value="RHEA"/>
</dbReference>
<dbReference type="GO" id="GO:0005524">
    <property type="term" value="F:ATP binding"/>
    <property type="evidence" value="ECO:0007669"/>
    <property type="project" value="UniProtKB-KW"/>
</dbReference>
<dbReference type="GO" id="GO:0050567">
    <property type="term" value="F:glutaminyl-tRNA synthase (glutamine-hydrolyzing) activity"/>
    <property type="evidence" value="ECO:0007669"/>
    <property type="project" value="UniProtKB-UniRule"/>
</dbReference>
<dbReference type="GO" id="GO:0070681">
    <property type="term" value="P:glutaminyl-tRNAGln biosynthesis via transamidation"/>
    <property type="evidence" value="ECO:0007669"/>
    <property type="project" value="TreeGrafter"/>
</dbReference>
<dbReference type="GO" id="GO:0006450">
    <property type="term" value="P:regulation of translational fidelity"/>
    <property type="evidence" value="ECO:0007669"/>
    <property type="project" value="InterPro"/>
</dbReference>
<dbReference type="GO" id="GO:0006412">
    <property type="term" value="P:translation"/>
    <property type="evidence" value="ECO:0007669"/>
    <property type="project" value="UniProtKB-UniRule"/>
</dbReference>
<dbReference type="Gene3D" id="1.10.20.60">
    <property type="entry name" value="Glu-tRNAGln amidotransferase C subunit, N-terminal domain"/>
    <property type="match status" value="1"/>
</dbReference>
<dbReference type="HAMAP" id="MF_00122">
    <property type="entry name" value="GatC"/>
    <property type="match status" value="1"/>
</dbReference>
<dbReference type="InterPro" id="IPR036113">
    <property type="entry name" value="Asp/Glu-ADT_sf_sub_c"/>
</dbReference>
<dbReference type="InterPro" id="IPR003837">
    <property type="entry name" value="GatC"/>
</dbReference>
<dbReference type="NCBIfam" id="TIGR00135">
    <property type="entry name" value="gatC"/>
    <property type="match status" value="1"/>
</dbReference>
<dbReference type="PANTHER" id="PTHR15004">
    <property type="entry name" value="GLUTAMYL-TRNA(GLN) AMIDOTRANSFERASE SUBUNIT C, MITOCHONDRIAL"/>
    <property type="match status" value="1"/>
</dbReference>
<dbReference type="PANTHER" id="PTHR15004:SF0">
    <property type="entry name" value="GLUTAMYL-TRNA(GLN) AMIDOTRANSFERASE SUBUNIT C, MITOCHONDRIAL"/>
    <property type="match status" value="1"/>
</dbReference>
<dbReference type="Pfam" id="PF02686">
    <property type="entry name" value="GatC"/>
    <property type="match status" value="1"/>
</dbReference>
<dbReference type="SUPFAM" id="SSF141000">
    <property type="entry name" value="Glu-tRNAGln amidotransferase C subunit"/>
    <property type="match status" value="1"/>
</dbReference>
<protein>
    <recommendedName>
        <fullName evidence="1">Aspartyl/glutamyl-tRNA(Asn/Gln) amidotransferase subunit C</fullName>
        <shortName evidence="1">Asp/Glu-ADT subunit C</shortName>
        <ecNumber evidence="1">6.3.5.-</ecNumber>
    </recommendedName>
</protein>
<gene>
    <name evidence="1" type="primary">gatC</name>
    <name type="ordered locus">Bxeno_A0065</name>
    <name type="ORF">Bxe_A4397</name>
</gene>
<name>GATC_PARXL</name>
<reference key="1">
    <citation type="journal article" date="2006" name="Proc. Natl. Acad. Sci. U.S.A.">
        <title>Burkholderia xenovorans LB400 harbors a multi-replicon, 9.73-Mbp genome shaped for versatility.</title>
        <authorList>
            <person name="Chain P.S.G."/>
            <person name="Denef V.J."/>
            <person name="Konstantinidis K.T."/>
            <person name="Vergez L.M."/>
            <person name="Agullo L."/>
            <person name="Reyes V.L."/>
            <person name="Hauser L."/>
            <person name="Cordova M."/>
            <person name="Gomez L."/>
            <person name="Gonzalez M."/>
            <person name="Land M."/>
            <person name="Lao V."/>
            <person name="Larimer F."/>
            <person name="LiPuma J.J."/>
            <person name="Mahenthiralingam E."/>
            <person name="Malfatti S.A."/>
            <person name="Marx C.J."/>
            <person name="Parnell J.J."/>
            <person name="Ramette A."/>
            <person name="Richardson P."/>
            <person name="Seeger M."/>
            <person name="Smith D."/>
            <person name="Spilker T."/>
            <person name="Sul W.J."/>
            <person name="Tsoi T.V."/>
            <person name="Ulrich L.E."/>
            <person name="Zhulin I.B."/>
            <person name="Tiedje J.M."/>
        </authorList>
    </citation>
    <scope>NUCLEOTIDE SEQUENCE [LARGE SCALE GENOMIC DNA]</scope>
    <source>
        <strain>LB400</strain>
    </source>
</reference>
<feature type="chain" id="PRO_1000016096" description="Aspartyl/glutamyl-tRNA(Asn/Gln) amidotransferase subunit C">
    <location>
        <begin position="1"/>
        <end position="99"/>
    </location>
</feature>
<evidence type="ECO:0000255" key="1">
    <source>
        <dbReference type="HAMAP-Rule" id="MF_00122"/>
    </source>
</evidence>
<proteinExistence type="inferred from homology"/>